<organism>
    <name type="scientific">Methylorubrum extorquens (strain PA1)</name>
    <name type="common">Methylobacterium extorquens</name>
    <dbReference type="NCBI Taxonomy" id="419610"/>
    <lineage>
        <taxon>Bacteria</taxon>
        <taxon>Pseudomonadati</taxon>
        <taxon>Pseudomonadota</taxon>
        <taxon>Alphaproteobacteria</taxon>
        <taxon>Hyphomicrobiales</taxon>
        <taxon>Methylobacteriaceae</taxon>
        <taxon>Methylorubrum</taxon>
    </lineage>
</organism>
<comment type="function">
    <text evidence="1">Allows the formation of correctly charged Asn-tRNA(Asn) or Gln-tRNA(Gln) through the transamidation of misacylated Asp-tRNA(Asn) or Glu-tRNA(Gln) in organisms which lack either or both of asparaginyl-tRNA or glutaminyl-tRNA synthetases. The reaction takes place in the presence of glutamine and ATP through an activated phospho-Asp-tRNA(Asn) or phospho-Glu-tRNA(Gln).</text>
</comment>
<comment type="catalytic activity">
    <reaction evidence="1">
        <text>L-glutamyl-tRNA(Gln) + L-glutamine + ATP + H2O = L-glutaminyl-tRNA(Gln) + L-glutamate + ADP + phosphate + H(+)</text>
        <dbReference type="Rhea" id="RHEA:17521"/>
        <dbReference type="Rhea" id="RHEA-COMP:9681"/>
        <dbReference type="Rhea" id="RHEA-COMP:9684"/>
        <dbReference type="ChEBI" id="CHEBI:15377"/>
        <dbReference type="ChEBI" id="CHEBI:15378"/>
        <dbReference type="ChEBI" id="CHEBI:29985"/>
        <dbReference type="ChEBI" id="CHEBI:30616"/>
        <dbReference type="ChEBI" id="CHEBI:43474"/>
        <dbReference type="ChEBI" id="CHEBI:58359"/>
        <dbReference type="ChEBI" id="CHEBI:78520"/>
        <dbReference type="ChEBI" id="CHEBI:78521"/>
        <dbReference type="ChEBI" id="CHEBI:456216"/>
    </reaction>
</comment>
<comment type="catalytic activity">
    <reaction evidence="1">
        <text>L-aspartyl-tRNA(Asn) + L-glutamine + ATP + H2O = L-asparaginyl-tRNA(Asn) + L-glutamate + ADP + phosphate + 2 H(+)</text>
        <dbReference type="Rhea" id="RHEA:14513"/>
        <dbReference type="Rhea" id="RHEA-COMP:9674"/>
        <dbReference type="Rhea" id="RHEA-COMP:9677"/>
        <dbReference type="ChEBI" id="CHEBI:15377"/>
        <dbReference type="ChEBI" id="CHEBI:15378"/>
        <dbReference type="ChEBI" id="CHEBI:29985"/>
        <dbReference type="ChEBI" id="CHEBI:30616"/>
        <dbReference type="ChEBI" id="CHEBI:43474"/>
        <dbReference type="ChEBI" id="CHEBI:58359"/>
        <dbReference type="ChEBI" id="CHEBI:78515"/>
        <dbReference type="ChEBI" id="CHEBI:78516"/>
        <dbReference type="ChEBI" id="CHEBI:456216"/>
    </reaction>
</comment>
<comment type="subunit">
    <text evidence="1">Heterotrimer of A, B and C subunits.</text>
</comment>
<comment type="similarity">
    <text evidence="1">Belongs to the GatC family.</text>
</comment>
<dbReference type="EC" id="6.3.5.-" evidence="1"/>
<dbReference type="EMBL" id="CP000908">
    <property type="protein sequence ID" value="ABY31709.1"/>
    <property type="molecule type" value="Genomic_DNA"/>
</dbReference>
<dbReference type="RefSeq" id="WP_003599355.1">
    <property type="nucleotide sequence ID" value="NC_010172.1"/>
</dbReference>
<dbReference type="SMR" id="A9W747"/>
<dbReference type="GeneID" id="72990964"/>
<dbReference type="KEGG" id="mex:Mext_3322"/>
<dbReference type="eggNOG" id="COG0721">
    <property type="taxonomic scope" value="Bacteria"/>
</dbReference>
<dbReference type="HOGENOM" id="CLU_105899_2_0_5"/>
<dbReference type="BioCyc" id="MEXT419610:MEXT_RS16685-MONOMER"/>
<dbReference type="GO" id="GO:0050566">
    <property type="term" value="F:asparaginyl-tRNA synthase (glutamine-hydrolyzing) activity"/>
    <property type="evidence" value="ECO:0007669"/>
    <property type="project" value="RHEA"/>
</dbReference>
<dbReference type="GO" id="GO:0005524">
    <property type="term" value="F:ATP binding"/>
    <property type="evidence" value="ECO:0007669"/>
    <property type="project" value="UniProtKB-KW"/>
</dbReference>
<dbReference type="GO" id="GO:0050567">
    <property type="term" value="F:glutaminyl-tRNA synthase (glutamine-hydrolyzing) activity"/>
    <property type="evidence" value="ECO:0007669"/>
    <property type="project" value="UniProtKB-UniRule"/>
</dbReference>
<dbReference type="GO" id="GO:0070681">
    <property type="term" value="P:glutaminyl-tRNAGln biosynthesis via transamidation"/>
    <property type="evidence" value="ECO:0007669"/>
    <property type="project" value="TreeGrafter"/>
</dbReference>
<dbReference type="GO" id="GO:0006450">
    <property type="term" value="P:regulation of translational fidelity"/>
    <property type="evidence" value="ECO:0007669"/>
    <property type="project" value="InterPro"/>
</dbReference>
<dbReference type="GO" id="GO:0006412">
    <property type="term" value="P:translation"/>
    <property type="evidence" value="ECO:0007669"/>
    <property type="project" value="UniProtKB-UniRule"/>
</dbReference>
<dbReference type="Gene3D" id="1.10.20.60">
    <property type="entry name" value="Glu-tRNAGln amidotransferase C subunit, N-terminal domain"/>
    <property type="match status" value="1"/>
</dbReference>
<dbReference type="HAMAP" id="MF_00122">
    <property type="entry name" value="GatC"/>
    <property type="match status" value="1"/>
</dbReference>
<dbReference type="InterPro" id="IPR036113">
    <property type="entry name" value="Asp/Glu-ADT_sf_sub_c"/>
</dbReference>
<dbReference type="InterPro" id="IPR003837">
    <property type="entry name" value="GatC"/>
</dbReference>
<dbReference type="NCBIfam" id="TIGR00135">
    <property type="entry name" value="gatC"/>
    <property type="match status" value="1"/>
</dbReference>
<dbReference type="PANTHER" id="PTHR15004">
    <property type="entry name" value="GLUTAMYL-TRNA(GLN) AMIDOTRANSFERASE SUBUNIT C, MITOCHONDRIAL"/>
    <property type="match status" value="1"/>
</dbReference>
<dbReference type="PANTHER" id="PTHR15004:SF0">
    <property type="entry name" value="GLUTAMYL-TRNA(GLN) AMIDOTRANSFERASE SUBUNIT C, MITOCHONDRIAL"/>
    <property type="match status" value="1"/>
</dbReference>
<dbReference type="Pfam" id="PF02686">
    <property type="entry name" value="GatC"/>
    <property type="match status" value="1"/>
</dbReference>
<dbReference type="SUPFAM" id="SSF141000">
    <property type="entry name" value="Glu-tRNAGln amidotransferase C subunit"/>
    <property type="match status" value="1"/>
</dbReference>
<sequence length="95" mass="10294">MSVDETTVRRIAHLARIAVTDEEVGPLKGELNAILAFVEQLGAVDVEGVEPMTSVTPMRMKKRADVVNDGGRASDIVANAPETEDNYFLVPKVVE</sequence>
<keyword id="KW-0067">ATP-binding</keyword>
<keyword id="KW-0436">Ligase</keyword>
<keyword id="KW-0547">Nucleotide-binding</keyword>
<keyword id="KW-0648">Protein biosynthesis</keyword>
<gene>
    <name evidence="1" type="primary">gatC</name>
    <name type="ordered locus">Mext_3322</name>
</gene>
<name>GATC_METEP</name>
<feature type="chain" id="PRO_1000095294" description="Aspartyl/glutamyl-tRNA(Asn/Gln) amidotransferase subunit C">
    <location>
        <begin position="1"/>
        <end position="95"/>
    </location>
</feature>
<accession>A9W747</accession>
<protein>
    <recommendedName>
        <fullName evidence="1">Aspartyl/glutamyl-tRNA(Asn/Gln) amidotransferase subunit C</fullName>
        <shortName evidence="1">Asp/Glu-ADT subunit C</shortName>
        <ecNumber evidence="1">6.3.5.-</ecNumber>
    </recommendedName>
</protein>
<reference key="1">
    <citation type="submission" date="2007-12" db="EMBL/GenBank/DDBJ databases">
        <title>Complete sequence of Methylobacterium extorquens PA1.</title>
        <authorList>
            <consortium name="US DOE Joint Genome Institute"/>
            <person name="Copeland A."/>
            <person name="Lucas S."/>
            <person name="Lapidus A."/>
            <person name="Barry K."/>
            <person name="Glavina del Rio T."/>
            <person name="Dalin E."/>
            <person name="Tice H."/>
            <person name="Pitluck S."/>
            <person name="Saunders E."/>
            <person name="Brettin T."/>
            <person name="Bruce D."/>
            <person name="Detter J.C."/>
            <person name="Han C."/>
            <person name="Schmutz J."/>
            <person name="Larimer F."/>
            <person name="Land M."/>
            <person name="Hauser L."/>
            <person name="Kyrpides N."/>
            <person name="Kim E."/>
            <person name="Marx C."/>
            <person name="Richardson P."/>
        </authorList>
    </citation>
    <scope>NUCLEOTIDE SEQUENCE [LARGE SCALE GENOMIC DNA]</scope>
    <source>
        <strain>PA1</strain>
    </source>
</reference>
<evidence type="ECO:0000255" key="1">
    <source>
        <dbReference type="HAMAP-Rule" id="MF_00122"/>
    </source>
</evidence>
<proteinExistence type="inferred from homology"/>